<sequence>MNAVAEAPVTEDVPAPFVFTDSAADKVKQLIEEEGNAELKLRVFVQGGGCSGFQYGFTFDEEVNEDDTTMVKNGVTLLIDSMSYQYLVGAEIDYKEDINGAQFVIKNPNASTTCGCGSSFSV</sequence>
<name>ERPA_CUPNH</name>
<keyword id="KW-0408">Iron</keyword>
<keyword id="KW-0411">Iron-sulfur</keyword>
<keyword id="KW-0479">Metal-binding</keyword>
<keyword id="KW-1185">Reference proteome</keyword>
<reference key="1">
    <citation type="journal article" date="2006" name="Nat. Biotechnol.">
        <title>Genome sequence of the bioplastic-producing 'Knallgas' bacterium Ralstonia eutropha H16.</title>
        <authorList>
            <person name="Pohlmann A."/>
            <person name="Fricke W.F."/>
            <person name="Reinecke F."/>
            <person name="Kusian B."/>
            <person name="Liesegang H."/>
            <person name="Cramm R."/>
            <person name="Eitinger T."/>
            <person name="Ewering C."/>
            <person name="Poetter M."/>
            <person name="Schwartz E."/>
            <person name="Strittmatter A."/>
            <person name="Voss I."/>
            <person name="Gottschalk G."/>
            <person name="Steinbuechel A."/>
            <person name="Friedrich B."/>
            <person name="Bowien B."/>
        </authorList>
    </citation>
    <scope>NUCLEOTIDE SEQUENCE [LARGE SCALE GENOMIC DNA]</scope>
    <source>
        <strain>ATCC 17699 / DSM 428 / KCTC 22496 / NCIMB 10442 / H16 / Stanier 337</strain>
    </source>
</reference>
<feature type="chain" id="PRO_0000311536" description="Putative iron-sulfur cluster insertion protein ErpA">
    <location>
        <begin position="1"/>
        <end position="122"/>
    </location>
</feature>
<feature type="binding site" evidence="1">
    <location>
        <position position="50"/>
    </location>
    <ligand>
        <name>iron-sulfur cluster</name>
        <dbReference type="ChEBI" id="CHEBI:30408"/>
    </ligand>
</feature>
<feature type="binding site" evidence="1">
    <location>
        <position position="114"/>
    </location>
    <ligand>
        <name>iron-sulfur cluster</name>
        <dbReference type="ChEBI" id="CHEBI:30408"/>
    </ligand>
</feature>
<feature type="binding site" evidence="1">
    <location>
        <position position="116"/>
    </location>
    <ligand>
        <name>iron-sulfur cluster</name>
        <dbReference type="ChEBI" id="CHEBI:30408"/>
    </ligand>
</feature>
<dbReference type="EMBL" id="AM260479">
    <property type="protein sequence ID" value="CAJ91635.1"/>
    <property type="molecule type" value="Genomic_DNA"/>
</dbReference>
<dbReference type="RefSeq" id="WP_010813904.1">
    <property type="nucleotide sequence ID" value="NZ_CP039287.1"/>
</dbReference>
<dbReference type="SMR" id="Q0KED6"/>
<dbReference type="STRING" id="381666.H16_A0485"/>
<dbReference type="GeneID" id="34308165"/>
<dbReference type="KEGG" id="reh:H16_A0485"/>
<dbReference type="eggNOG" id="COG0316">
    <property type="taxonomic scope" value="Bacteria"/>
</dbReference>
<dbReference type="HOGENOM" id="CLU_069054_5_3_4"/>
<dbReference type="OrthoDB" id="9801228at2"/>
<dbReference type="Proteomes" id="UP000008210">
    <property type="component" value="Chromosome 1"/>
</dbReference>
<dbReference type="GO" id="GO:0051537">
    <property type="term" value="F:2 iron, 2 sulfur cluster binding"/>
    <property type="evidence" value="ECO:0007669"/>
    <property type="project" value="UniProtKB-ARBA"/>
</dbReference>
<dbReference type="GO" id="GO:0051539">
    <property type="term" value="F:4 iron, 4 sulfur cluster binding"/>
    <property type="evidence" value="ECO:0007669"/>
    <property type="project" value="TreeGrafter"/>
</dbReference>
<dbReference type="GO" id="GO:0005506">
    <property type="term" value="F:iron ion binding"/>
    <property type="evidence" value="ECO:0007669"/>
    <property type="project" value="UniProtKB-UniRule"/>
</dbReference>
<dbReference type="GO" id="GO:0016226">
    <property type="term" value="P:iron-sulfur cluster assembly"/>
    <property type="evidence" value="ECO:0007669"/>
    <property type="project" value="UniProtKB-UniRule"/>
</dbReference>
<dbReference type="FunFam" id="2.60.300.12:FF:000002">
    <property type="entry name" value="Iron-sulfur cluster insertion protein ErpA"/>
    <property type="match status" value="1"/>
</dbReference>
<dbReference type="Gene3D" id="2.60.300.12">
    <property type="entry name" value="HesB-like domain"/>
    <property type="match status" value="1"/>
</dbReference>
<dbReference type="HAMAP" id="MF_01380">
    <property type="entry name" value="Fe_S_insert_ErpA"/>
    <property type="match status" value="1"/>
</dbReference>
<dbReference type="InterPro" id="IPR000361">
    <property type="entry name" value="FeS_biogenesis"/>
</dbReference>
<dbReference type="InterPro" id="IPR016092">
    <property type="entry name" value="FeS_cluster_insertion"/>
</dbReference>
<dbReference type="InterPro" id="IPR017870">
    <property type="entry name" value="FeS_cluster_insertion_CS"/>
</dbReference>
<dbReference type="InterPro" id="IPR023063">
    <property type="entry name" value="FeS_cluster_insertion_RrpA"/>
</dbReference>
<dbReference type="InterPro" id="IPR035903">
    <property type="entry name" value="HesB-like_dom_sf"/>
</dbReference>
<dbReference type="NCBIfam" id="TIGR00049">
    <property type="entry name" value="iron-sulfur cluster assembly accessory protein"/>
    <property type="match status" value="1"/>
</dbReference>
<dbReference type="NCBIfam" id="NF010147">
    <property type="entry name" value="PRK13623.1"/>
    <property type="match status" value="1"/>
</dbReference>
<dbReference type="PANTHER" id="PTHR43011">
    <property type="entry name" value="IRON-SULFUR CLUSTER ASSEMBLY 2 HOMOLOG, MITOCHONDRIAL"/>
    <property type="match status" value="1"/>
</dbReference>
<dbReference type="PANTHER" id="PTHR43011:SF1">
    <property type="entry name" value="IRON-SULFUR CLUSTER ASSEMBLY 2 HOMOLOG, MITOCHONDRIAL"/>
    <property type="match status" value="1"/>
</dbReference>
<dbReference type="Pfam" id="PF01521">
    <property type="entry name" value="Fe-S_biosyn"/>
    <property type="match status" value="1"/>
</dbReference>
<dbReference type="SUPFAM" id="SSF89360">
    <property type="entry name" value="HesB-like domain"/>
    <property type="match status" value="1"/>
</dbReference>
<dbReference type="PROSITE" id="PS01152">
    <property type="entry name" value="HESB"/>
    <property type="match status" value="1"/>
</dbReference>
<proteinExistence type="inferred from homology"/>
<accession>Q0KED6</accession>
<evidence type="ECO:0000255" key="1">
    <source>
        <dbReference type="HAMAP-Rule" id="MF_01380"/>
    </source>
</evidence>
<comment type="function">
    <text evidence="1">Required for insertion of 4Fe-4S clusters.</text>
</comment>
<comment type="cofactor">
    <cofactor evidence="1">
        <name>iron-sulfur cluster</name>
        <dbReference type="ChEBI" id="CHEBI:30408"/>
    </cofactor>
    <text evidence="1">Binds 1 iron-sulfur cluster per subunit.</text>
</comment>
<comment type="subunit">
    <text evidence="1">Homodimer.</text>
</comment>
<comment type="similarity">
    <text evidence="1">Belongs to the HesB/IscA family.</text>
</comment>
<organism>
    <name type="scientific">Cupriavidus necator (strain ATCC 17699 / DSM 428 / KCTC 22496 / NCIMB 10442 / H16 / Stanier 337)</name>
    <name type="common">Ralstonia eutropha</name>
    <dbReference type="NCBI Taxonomy" id="381666"/>
    <lineage>
        <taxon>Bacteria</taxon>
        <taxon>Pseudomonadati</taxon>
        <taxon>Pseudomonadota</taxon>
        <taxon>Betaproteobacteria</taxon>
        <taxon>Burkholderiales</taxon>
        <taxon>Burkholderiaceae</taxon>
        <taxon>Cupriavidus</taxon>
    </lineage>
</organism>
<protein>
    <recommendedName>
        <fullName evidence="1">Putative iron-sulfur cluster insertion protein ErpA</fullName>
    </recommendedName>
</protein>
<gene>
    <name evidence="1" type="primary">erpA</name>
    <name type="ordered locus">H16_A0485</name>
</gene>